<proteinExistence type="inferred from homology"/>
<comment type="function">
    <text evidence="1">Endonuclease that specifically degrades the RNA of RNA-DNA hybrids.</text>
</comment>
<comment type="catalytic activity">
    <reaction evidence="1">
        <text>Endonucleolytic cleavage to 5'-phosphomonoester.</text>
        <dbReference type="EC" id="3.1.26.4"/>
    </reaction>
</comment>
<comment type="cofactor">
    <cofactor evidence="1">
        <name>Mn(2+)</name>
        <dbReference type="ChEBI" id="CHEBI:29035"/>
    </cofactor>
    <cofactor evidence="1">
        <name>Mg(2+)</name>
        <dbReference type="ChEBI" id="CHEBI:18420"/>
    </cofactor>
    <text evidence="1">Manganese or magnesium. Binds 1 divalent metal ion per monomer in the absence of substrate. May bind a second metal ion after substrate binding.</text>
</comment>
<comment type="subcellular location">
    <subcellularLocation>
        <location evidence="1">Cytoplasm</location>
    </subcellularLocation>
</comment>
<comment type="similarity">
    <text evidence="1">Belongs to the RNase HII family.</text>
</comment>
<keyword id="KW-0963">Cytoplasm</keyword>
<keyword id="KW-0255">Endonuclease</keyword>
<keyword id="KW-0378">Hydrolase</keyword>
<keyword id="KW-0464">Manganese</keyword>
<keyword id="KW-0479">Metal-binding</keyword>
<keyword id="KW-0540">Nuclease</keyword>
<keyword id="KW-1185">Reference proteome</keyword>
<reference key="1">
    <citation type="journal article" date="2003" name="Proc. Natl. Acad. Sci. U.S.A.">
        <title>The complete genome sequence of the Arabidopsis and tomato pathogen Pseudomonas syringae pv. tomato DC3000.</title>
        <authorList>
            <person name="Buell C.R."/>
            <person name="Joardar V."/>
            <person name="Lindeberg M."/>
            <person name="Selengut J."/>
            <person name="Paulsen I.T."/>
            <person name="Gwinn M.L."/>
            <person name="Dodson R.J."/>
            <person name="DeBoy R.T."/>
            <person name="Durkin A.S."/>
            <person name="Kolonay J.F."/>
            <person name="Madupu R."/>
            <person name="Daugherty S.C."/>
            <person name="Brinkac L.M."/>
            <person name="Beanan M.J."/>
            <person name="Haft D.H."/>
            <person name="Nelson W.C."/>
            <person name="Davidsen T.M."/>
            <person name="Zafar N."/>
            <person name="Zhou L."/>
            <person name="Liu J."/>
            <person name="Yuan Q."/>
            <person name="Khouri H.M."/>
            <person name="Fedorova N.B."/>
            <person name="Tran B."/>
            <person name="Russell D."/>
            <person name="Berry K.J."/>
            <person name="Utterback T.R."/>
            <person name="Van Aken S.E."/>
            <person name="Feldblyum T.V."/>
            <person name="D'Ascenzo M."/>
            <person name="Deng W.-L."/>
            <person name="Ramos A.R."/>
            <person name="Alfano J.R."/>
            <person name="Cartinhour S."/>
            <person name="Chatterjee A.K."/>
            <person name="Delaney T.P."/>
            <person name="Lazarowitz S.G."/>
            <person name="Martin G.B."/>
            <person name="Schneider D.J."/>
            <person name="Tang X."/>
            <person name="Bender C.L."/>
            <person name="White O."/>
            <person name="Fraser C.M."/>
            <person name="Collmer A."/>
        </authorList>
    </citation>
    <scope>NUCLEOTIDE SEQUENCE [LARGE SCALE GENOMIC DNA]</scope>
    <source>
        <strain>ATCC BAA-871 / DC3000</strain>
    </source>
</reference>
<dbReference type="EC" id="3.1.26.4" evidence="1"/>
<dbReference type="EMBL" id="AE016853">
    <property type="protein sequence ID" value="AAO55068.1"/>
    <property type="molecule type" value="Genomic_DNA"/>
</dbReference>
<dbReference type="RefSeq" id="NP_791373.1">
    <property type="nucleotide sequence ID" value="NC_004578.1"/>
</dbReference>
<dbReference type="RefSeq" id="WP_005765997.1">
    <property type="nucleotide sequence ID" value="NC_004578.1"/>
</dbReference>
<dbReference type="SMR" id="Q886M9"/>
<dbReference type="STRING" id="223283.PSPTO_1548"/>
<dbReference type="GeneID" id="1183185"/>
<dbReference type="KEGG" id="pst:PSPTO_1548"/>
<dbReference type="PATRIC" id="fig|223283.9.peg.1574"/>
<dbReference type="eggNOG" id="COG0164">
    <property type="taxonomic scope" value="Bacteria"/>
</dbReference>
<dbReference type="HOGENOM" id="CLU_036532_3_2_6"/>
<dbReference type="OrthoDB" id="9803420at2"/>
<dbReference type="PhylomeDB" id="Q886M9"/>
<dbReference type="Proteomes" id="UP000002515">
    <property type="component" value="Chromosome"/>
</dbReference>
<dbReference type="GO" id="GO:0005737">
    <property type="term" value="C:cytoplasm"/>
    <property type="evidence" value="ECO:0007669"/>
    <property type="project" value="UniProtKB-SubCell"/>
</dbReference>
<dbReference type="GO" id="GO:0032299">
    <property type="term" value="C:ribonuclease H2 complex"/>
    <property type="evidence" value="ECO:0007669"/>
    <property type="project" value="TreeGrafter"/>
</dbReference>
<dbReference type="GO" id="GO:0030145">
    <property type="term" value="F:manganese ion binding"/>
    <property type="evidence" value="ECO:0007669"/>
    <property type="project" value="UniProtKB-UniRule"/>
</dbReference>
<dbReference type="GO" id="GO:0003723">
    <property type="term" value="F:RNA binding"/>
    <property type="evidence" value="ECO:0007669"/>
    <property type="project" value="InterPro"/>
</dbReference>
<dbReference type="GO" id="GO:0004523">
    <property type="term" value="F:RNA-DNA hybrid ribonuclease activity"/>
    <property type="evidence" value="ECO:0007669"/>
    <property type="project" value="UniProtKB-UniRule"/>
</dbReference>
<dbReference type="GO" id="GO:0043137">
    <property type="term" value="P:DNA replication, removal of RNA primer"/>
    <property type="evidence" value="ECO:0007669"/>
    <property type="project" value="TreeGrafter"/>
</dbReference>
<dbReference type="GO" id="GO:0006298">
    <property type="term" value="P:mismatch repair"/>
    <property type="evidence" value="ECO:0007669"/>
    <property type="project" value="TreeGrafter"/>
</dbReference>
<dbReference type="CDD" id="cd07182">
    <property type="entry name" value="RNase_HII_bacteria_HII_like"/>
    <property type="match status" value="1"/>
</dbReference>
<dbReference type="FunFam" id="3.30.420.10:FF:000006">
    <property type="entry name" value="Ribonuclease HII"/>
    <property type="match status" value="1"/>
</dbReference>
<dbReference type="Gene3D" id="3.30.420.10">
    <property type="entry name" value="Ribonuclease H-like superfamily/Ribonuclease H"/>
    <property type="match status" value="1"/>
</dbReference>
<dbReference type="HAMAP" id="MF_00052_B">
    <property type="entry name" value="RNase_HII_B"/>
    <property type="match status" value="1"/>
</dbReference>
<dbReference type="InterPro" id="IPR022898">
    <property type="entry name" value="RNase_HII"/>
</dbReference>
<dbReference type="InterPro" id="IPR001352">
    <property type="entry name" value="RNase_HII/HIII"/>
</dbReference>
<dbReference type="InterPro" id="IPR024567">
    <property type="entry name" value="RNase_HII/HIII_dom"/>
</dbReference>
<dbReference type="InterPro" id="IPR012337">
    <property type="entry name" value="RNaseH-like_sf"/>
</dbReference>
<dbReference type="InterPro" id="IPR036397">
    <property type="entry name" value="RNaseH_sf"/>
</dbReference>
<dbReference type="NCBIfam" id="NF000595">
    <property type="entry name" value="PRK00015.1-3"/>
    <property type="match status" value="1"/>
</dbReference>
<dbReference type="NCBIfam" id="NF000596">
    <property type="entry name" value="PRK00015.1-4"/>
    <property type="match status" value="1"/>
</dbReference>
<dbReference type="PANTHER" id="PTHR10954">
    <property type="entry name" value="RIBONUCLEASE H2 SUBUNIT A"/>
    <property type="match status" value="1"/>
</dbReference>
<dbReference type="PANTHER" id="PTHR10954:SF18">
    <property type="entry name" value="RIBONUCLEASE HII"/>
    <property type="match status" value="1"/>
</dbReference>
<dbReference type="Pfam" id="PF01351">
    <property type="entry name" value="RNase_HII"/>
    <property type="match status" value="1"/>
</dbReference>
<dbReference type="SUPFAM" id="SSF53098">
    <property type="entry name" value="Ribonuclease H-like"/>
    <property type="match status" value="1"/>
</dbReference>
<dbReference type="PROSITE" id="PS51975">
    <property type="entry name" value="RNASE_H_2"/>
    <property type="match status" value="1"/>
</dbReference>
<feature type="chain" id="PRO_0000111607" description="Ribonuclease HII">
    <location>
        <begin position="1"/>
        <end position="217"/>
    </location>
</feature>
<feature type="domain" description="RNase H type-2" evidence="2">
    <location>
        <begin position="12"/>
        <end position="201"/>
    </location>
</feature>
<feature type="binding site" evidence="1">
    <location>
        <position position="18"/>
    </location>
    <ligand>
        <name>a divalent metal cation</name>
        <dbReference type="ChEBI" id="CHEBI:60240"/>
    </ligand>
</feature>
<feature type="binding site" evidence="1">
    <location>
        <position position="19"/>
    </location>
    <ligand>
        <name>a divalent metal cation</name>
        <dbReference type="ChEBI" id="CHEBI:60240"/>
    </ligand>
</feature>
<feature type="binding site" evidence="1">
    <location>
        <position position="110"/>
    </location>
    <ligand>
        <name>a divalent metal cation</name>
        <dbReference type="ChEBI" id="CHEBI:60240"/>
    </ligand>
</feature>
<evidence type="ECO:0000255" key="1">
    <source>
        <dbReference type="HAMAP-Rule" id="MF_00052"/>
    </source>
</evidence>
<evidence type="ECO:0000255" key="2">
    <source>
        <dbReference type="PROSITE-ProRule" id="PRU01319"/>
    </source>
</evidence>
<gene>
    <name evidence="1" type="primary">rnhB</name>
    <name type="ordered locus">PSPTO_1548</name>
</gene>
<accession>Q886M9</accession>
<organism>
    <name type="scientific">Pseudomonas syringae pv. tomato (strain ATCC BAA-871 / DC3000)</name>
    <dbReference type="NCBI Taxonomy" id="223283"/>
    <lineage>
        <taxon>Bacteria</taxon>
        <taxon>Pseudomonadati</taxon>
        <taxon>Pseudomonadota</taxon>
        <taxon>Gammaproteobacteria</taxon>
        <taxon>Pseudomonadales</taxon>
        <taxon>Pseudomonadaceae</taxon>
        <taxon>Pseudomonas</taxon>
    </lineage>
</organism>
<protein>
    <recommendedName>
        <fullName evidence="1">Ribonuclease HII</fullName>
        <shortName evidence="1">RNase HII</shortName>
        <ecNumber evidence="1">3.1.26.4</ecNumber>
    </recommendedName>
</protein>
<sequence>MQTGLDFTLVEDLVAGVDEVGRGPLCGAVVTAAVILDPAKPILGLNDSKKLTEAKREKLFVEIQEKALCWFIARAEVEEIDQLNILHATMLAMKRAVEGLSITPKLALIDGNRCPQLSVPSAPVVKGDSKVPAIAAASILAKVSRDREMAALELIYPGYGIAGHKGYPTPVHLEALARLGPTPIHRRSFGPVRTAHEARAAIMLGGSIPLPVGLLQD</sequence>
<name>RNH2_PSESM</name>